<keyword id="KW-0963">Cytoplasm</keyword>
<keyword id="KW-0251">Elongation factor</keyword>
<keyword id="KW-0342">GTP-binding</keyword>
<keyword id="KW-0488">Methylation</keyword>
<keyword id="KW-0547">Nucleotide-binding</keyword>
<keyword id="KW-0597">Phosphoprotein</keyword>
<keyword id="KW-0648">Protein biosynthesis</keyword>
<proteinExistence type="evidence at transcript level"/>
<dbReference type="EMBL" id="AJ222579">
    <property type="protein sequence ID" value="CAA10847.1"/>
    <property type="molecule type" value="mRNA"/>
</dbReference>
<dbReference type="SMR" id="O24534"/>
<dbReference type="GO" id="GO:0005737">
    <property type="term" value="C:cytoplasm"/>
    <property type="evidence" value="ECO:0007669"/>
    <property type="project" value="UniProtKB-SubCell"/>
</dbReference>
<dbReference type="GO" id="GO:0005525">
    <property type="term" value="F:GTP binding"/>
    <property type="evidence" value="ECO:0007669"/>
    <property type="project" value="UniProtKB-KW"/>
</dbReference>
<dbReference type="GO" id="GO:0003924">
    <property type="term" value="F:GTPase activity"/>
    <property type="evidence" value="ECO:0007669"/>
    <property type="project" value="InterPro"/>
</dbReference>
<dbReference type="GO" id="GO:0003746">
    <property type="term" value="F:translation elongation factor activity"/>
    <property type="evidence" value="ECO:0007669"/>
    <property type="project" value="UniProtKB-KW"/>
</dbReference>
<dbReference type="CDD" id="cd01883">
    <property type="entry name" value="EF1_alpha"/>
    <property type="match status" value="1"/>
</dbReference>
<dbReference type="CDD" id="cd03693">
    <property type="entry name" value="EF1_alpha_II"/>
    <property type="match status" value="1"/>
</dbReference>
<dbReference type="CDD" id="cd03705">
    <property type="entry name" value="EF1_alpha_III"/>
    <property type="match status" value="1"/>
</dbReference>
<dbReference type="FunFam" id="2.40.30.10:FF:000003">
    <property type="entry name" value="Elongation factor 1-alpha"/>
    <property type="match status" value="1"/>
</dbReference>
<dbReference type="FunFam" id="2.40.30.10:FF:000005">
    <property type="entry name" value="Elongation factor 1-alpha"/>
    <property type="match status" value="1"/>
</dbReference>
<dbReference type="FunFam" id="3.40.50.300:FF:000255">
    <property type="entry name" value="Elongation factor 1-alpha"/>
    <property type="match status" value="1"/>
</dbReference>
<dbReference type="Gene3D" id="3.40.50.300">
    <property type="entry name" value="P-loop containing nucleotide triphosphate hydrolases"/>
    <property type="match status" value="1"/>
</dbReference>
<dbReference type="Gene3D" id="2.40.30.10">
    <property type="entry name" value="Translation factors"/>
    <property type="match status" value="2"/>
</dbReference>
<dbReference type="HAMAP" id="MF_00118_A">
    <property type="entry name" value="EF_Tu_A"/>
    <property type="match status" value="1"/>
</dbReference>
<dbReference type="InterPro" id="IPR004161">
    <property type="entry name" value="EFTu-like_2"/>
</dbReference>
<dbReference type="InterPro" id="IPR031157">
    <property type="entry name" value="G_TR_CS"/>
</dbReference>
<dbReference type="InterPro" id="IPR054696">
    <property type="entry name" value="GTP-eEF1A_C"/>
</dbReference>
<dbReference type="InterPro" id="IPR027417">
    <property type="entry name" value="P-loop_NTPase"/>
</dbReference>
<dbReference type="InterPro" id="IPR000795">
    <property type="entry name" value="T_Tr_GTP-bd_dom"/>
</dbReference>
<dbReference type="InterPro" id="IPR050100">
    <property type="entry name" value="TRAFAC_GTPase_members"/>
</dbReference>
<dbReference type="InterPro" id="IPR009000">
    <property type="entry name" value="Transl_B-barrel_sf"/>
</dbReference>
<dbReference type="InterPro" id="IPR009001">
    <property type="entry name" value="Transl_elong_EF1A/Init_IF2_C"/>
</dbReference>
<dbReference type="InterPro" id="IPR004539">
    <property type="entry name" value="Transl_elong_EF1A_euk/arc"/>
</dbReference>
<dbReference type="NCBIfam" id="TIGR00483">
    <property type="entry name" value="EF-1_alpha"/>
    <property type="match status" value="1"/>
</dbReference>
<dbReference type="NCBIfam" id="NF008969">
    <property type="entry name" value="PRK12317.1"/>
    <property type="match status" value="1"/>
</dbReference>
<dbReference type="PANTHER" id="PTHR23115">
    <property type="entry name" value="TRANSLATION FACTOR"/>
    <property type="match status" value="1"/>
</dbReference>
<dbReference type="Pfam" id="PF22594">
    <property type="entry name" value="GTP-eEF1A_C"/>
    <property type="match status" value="1"/>
</dbReference>
<dbReference type="Pfam" id="PF00009">
    <property type="entry name" value="GTP_EFTU"/>
    <property type="match status" value="1"/>
</dbReference>
<dbReference type="Pfam" id="PF03144">
    <property type="entry name" value="GTP_EFTU_D2"/>
    <property type="match status" value="1"/>
</dbReference>
<dbReference type="PRINTS" id="PR00315">
    <property type="entry name" value="ELONGATNFCT"/>
</dbReference>
<dbReference type="SUPFAM" id="SSF50465">
    <property type="entry name" value="EF-Tu/eEF-1alpha/eIF2-gamma C-terminal domain"/>
    <property type="match status" value="1"/>
</dbReference>
<dbReference type="SUPFAM" id="SSF52540">
    <property type="entry name" value="P-loop containing nucleoside triphosphate hydrolases"/>
    <property type="match status" value="1"/>
</dbReference>
<dbReference type="SUPFAM" id="SSF50447">
    <property type="entry name" value="Translation proteins"/>
    <property type="match status" value="1"/>
</dbReference>
<dbReference type="PROSITE" id="PS00301">
    <property type="entry name" value="G_TR_1"/>
    <property type="match status" value="1"/>
</dbReference>
<dbReference type="PROSITE" id="PS51722">
    <property type="entry name" value="G_TR_2"/>
    <property type="match status" value="1"/>
</dbReference>
<name>EF1A_VICFA</name>
<evidence type="ECO:0000250" key="1"/>
<evidence type="ECO:0000250" key="2">
    <source>
        <dbReference type="UniProtKB" id="Q8GTY0"/>
    </source>
</evidence>
<evidence type="ECO:0000305" key="3"/>
<reference key="1">
    <citation type="submission" date="1997-11" db="EMBL/GenBank/DDBJ databases">
        <authorList>
            <person name="Fruehling M."/>
            <person name="Puehler A."/>
            <person name="Perlick A.M."/>
        </authorList>
    </citation>
    <scope>NUCLEOTIDE SEQUENCE [MRNA]</scope>
    <source>
        <strain>cv. Kleine Thueringer</strain>
        <tissue>Root nodule</tissue>
    </source>
</reference>
<sequence length="447" mass="49244">MGKEKVHINIVVIGHVDSGKSTTTGHLIYKLGGIDKRVIERFEKEAAEMNKRSFKYAWVLDKLKAERERGITIDIALWKFETSKYYCTVIDAPGHRDFIKNMITGTSQADCAVLIIDSTTGGFEAGISKDGQTREHALLAFTLGVKQMICCCNKMDATTPKYSKGRYEEIVKEVSSYLKKVGYNPDKIPFVPISGFEGDNMIERSTNLDWYKGPTLLDALDNINEPKRPSDKPLRLPLQDVYKIGGIGIVPVGRVETGVVKPGMLVTFAPTGLTTEVKSVEMHHEALTEALPGDNVGFNVKNVAVKDLKRGFVASNSKDDPAKEAANFTSQVIIMNHPGQIGNGYAPVLDCHTSHIAVKFAELITKIDRRSGKEIEKEPKFLKNGDAGMVKMIPTKPMVVETFAEYPPLGRFAVRDMRQTVAVGVIKSVEKKDPTGAKVTKAAAKKK</sequence>
<organism>
    <name type="scientific">Vicia faba</name>
    <name type="common">Broad bean</name>
    <name type="synonym">Faba vulgaris</name>
    <dbReference type="NCBI Taxonomy" id="3906"/>
    <lineage>
        <taxon>Eukaryota</taxon>
        <taxon>Viridiplantae</taxon>
        <taxon>Streptophyta</taxon>
        <taxon>Embryophyta</taxon>
        <taxon>Tracheophyta</taxon>
        <taxon>Spermatophyta</taxon>
        <taxon>Magnoliopsida</taxon>
        <taxon>eudicotyledons</taxon>
        <taxon>Gunneridae</taxon>
        <taxon>Pentapetalae</taxon>
        <taxon>rosids</taxon>
        <taxon>fabids</taxon>
        <taxon>Fabales</taxon>
        <taxon>Fabaceae</taxon>
        <taxon>Papilionoideae</taxon>
        <taxon>50 kb inversion clade</taxon>
        <taxon>NPAAA clade</taxon>
        <taxon>Hologalegina</taxon>
        <taxon>IRL clade</taxon>
        <taxon>Fabeae</taxon>
        <taxon>Vicia</taxon>
    </lineage>
</organism>
<comment type="function">
    <text>This protein promotes the GTP-dependent binding of aminoacyl-tRNA to the A-site of ribosomes during protein biosynthesis.</text>
</comment>
<comment type="subcellular location">
    <subcellularLocation>
        <location>Cytoplasm</location>
    </subcellularLocation>
</comment>
<comment type="similarity">
    <text evidence="3">Belongs to the TRAFAC class translation factor GTPase superfamily. Classic translation factor GTPase family. EF-Tu/EF-1A subfamily.</text>
</comment>
<protein>
    <recommendedName>
        <fullName>Elongation factor 1-alpha</fullName>
        <shortName>EF-1-alpha</shortName>
    </recommendedName>
</protein>
<feature type="chain" id="PRO_0000090947" description="Elongation factor 1-alpha">
    <location>
        <begin position="1"/>
        <end position="447"/>
    </location>
</feature>
<feature type="domain" description="tr-type G">
    <location>
        <begin position="5"/>
        <end position="230"/>
    </location>
</feature>
<feature type="region of interest" description="G1" evidence="1">
    <location>
        <begin position="14"/>
        <end position="21"/>
    </location>
</feature>
<feature type="region of interest" description="G2" evidence="1">
    <location>
        <begin position="70"/>
        <end position="74"/>
    </location>
</feature>
<feature type="region of interest" description="G3" evidence="1">
    <location>
        <begin position="91"/>
        <end position="94"/>
    </location>
</feature>
<feature type="region of interest" description="G4" evidence="1">
    <location>
        <begin position="153"/>
        <end position="156"/>
    </location>
</feature>
<feature type="region of interest" description="G5" evidence="1">
    <location>
        <begin position="194"/>
        <end position="196"/>
    </location>
</feature>
<feature type="binding site" evidence="1">
    <location>
        <begin position="14"/>
        <end position="21"/>
    </location>
    <ligand>
        <name>GTP</name>
        <dbReference type="ChEBI" id="CHEBI:37565"/>
    </ligand>
</feature>
<feature type="binding site" evidence="1">
    <location>
        <begin position="91"/>
        <end position="95"/>
    </location>
    <ligand>
        <name>GTP</name>
        <dbReference type="ChEBI" id="CHEBI:37565"/>
    </ligand>
</feature>
<feature type="binding site" evidence="1">
    <location>
        <begin position="153"/>
        <end position="156"/>
    </location>
    <ligand>
        <name>GTP</name>
        <dbReference type="ChEBI" id="CHEBI:37565"/>
    </ligand>
</feature>
<feature type="modified residue" description="N6,N6-dimethyllysine" evidence="2">
    <location>
        <position position="55"/>
    </location>
</feature>
<feature type="modified residue" description="N6,N6,N6-trimethyllysine" evidence="2">
    <location>
        <position position="79"/>
    </location>
</feature>
<feature type="modified residue" description="N6,N6,N6-trimethyllysine" evidence="2">
    <location>
        <position position="187"/>
    </location>
</feature>
<feature type="modified residue" description="N6-methyllysine" evidence="2">
    <location>
        <position position="261"/>
    </location>
</feature>
<feature type="modified residue" description="5-glutamyl glycerylphosphorylethanolamine" evidence="1">
    <location>
        <position position="289"/>
    </location>
</feature>
<feature type="modified residue" description="N6,N6,N6-trimethyllysine" evidence="2">
    <location>
        <position position="306"/>
    </location>
</feature>
<feature type="modified residue" description="5-glutamyl glycerylphosphorylethanolamine" evidence="1">
    <location>
        <position position="362"/>
    </location>
</feature>
<feature type="modified residue" description="N6,N6,N6-trimethyllysine" evidence="2">
    <location>
        <position position="396"/>
    </location>
</feature>
<accession>O24534</accession>